<comment type="catalytic activity">
    <reaction evidence="1">
        <text>tRNA(Cys) + L-cysteine + ATP = L-cysteinyl-tRNA(Cys) + AMP + diphosphate</text>
        <dbReference type="Rhea" id="RHEA:17773"/>
        <dbReference type="Rhea" id="RHEA-COMP:9661"/>
        <dbReference type="Rhea" id="RHEA-COMP:9679"/>
        <dbReference type="ChEBI" id="CHEBI:30616"/>
        <dbReference type="ChEBI" id="CHEBI:33019"/>
        <dbReference type="ChEBI" id="CHEBI:35235"/>
        <dbReference type="ChEBI" id="CHEBI:78442"/>
        <dbReference type="ChEBI" id="CHEBI:78517"/>
        <dbReference type="ChEBI" id="CHEBI:456215"/>
        <dbReference type="EC" id="6.1.1.16"/>
    </reaction>
</comment>
<comment type="cofactor">
    <cofactor evidence="1">
        <name>Zn(2+)</name>
        <dbReference type="ChEBI" id="CHEBI:29105"/>
    </cofactor>
    <text evidence="1">Binds 1 zinc ion per subunit.</text>
</comment>
<comment type="subunit">
    <text evidence="1">Monomer.</text>
</comment>
<comment type="subcellular location">
    <subcellularLocation>
        <location evidence="1">Cytoplasm</location>
    </subcellularLocation>
</comment>
<comment type="similarity">
    <text evidence="1">Belongs to the class-I aminoacyl-tRNA synthetase family.</text>
</comment>
<name>SYC_CAMC1</name>
<dbReference type="EC" id="6.1.1.16" evidence="1"/>
<dbReference type="EMBL" id="CP000792">
    <property type="protein sequence ID" value="EAT97628.1"/>
    <property type="molecule type" value="Genomic_DNA"/>
</dbReference>
<dbReference type="RefSeq" id="WP_012001831.1">
    <property type="nucleotide sequence ID" value="NC_009802.2"/>
</dbReference>
<dbReference type="SMR" id="A7ZDQ1"/>
<dbReference type="STRING" id="360104.CCC13826_0116"/>
<dbReference type="KEGG" id="cco:CCC13826_0116"/>
<dbReference type="eggNOG" id="COG0215">
    <property type="taxonomic scope" value="Bacteria"/>
</dbReference>
<dbReference type="HOGENOM" id="CLU_013528_0_1_7"/>
<dbReference type="OrthoDB" id="9815130at2"/>
<dbReference type="Proteomes" id="UP000001121">
    <property type="component" value="Chromosome"/>
</dbReference>
<dbReference type="GO" id="GO:0005829">
    <property type="term" value="C:cytosol"/>
    <property type="evidence" value="ECO:0007669"/>
    <property type="project" value="TreeGrafter"/>
</dbReference>
<dbReference type="GO" id="GO:0005524">
    <property type="term" value="F:ATP binding"/>
    <property type="evidence" value="ECO:0007669"/>
    <property type="project" value="UniProtKB-UniRule"/>
</dbReference>
<dbReference type="GO" id="GO:0004817">
    <property type="term" value="F:cysteine-tRNA ligase activity"/>
    <property type="evidence" value="ECO:0007669"/>
    <property type="project" value="UniProtKB-UniRule"/>
</dbReference>
<dbReference type="GO" id="GO:0008270">
    <property type="term" value="F:zinc ion binding"/>
    <property type="evidence" value="ECO:0007669"/>
    <property type="project" value="UniProtKB-UniRule"/>
</dbReference>
<dbReference type="GO" id="GO:0006423">
    <property type="term" value="P:cysteinyl-tRNA aminoacylation"/>
    <property type="evidence" value="ECO:0007669"/>
    <property type="project" value="UniProtKB-UniRule"/>
</dbReference>
<dbReference type="CDD" id="cd00672">
    <property type="entry name" value="CysRS_core"/>
    <property type="match status" value="1"/>
</dbReference>
<dbReference type="Gene3D" id="1.20.120.1910">
    <property type="entry name" value="Cysteine-tRNA ligase, C-terminal anti-codon recognition domain"/>
    <property type="match status" value="1"/>
</dbReference>
<dbReference type="Gene3D" id="3.40.50.620">
    <property type="entry name" value="HUPs"/>
    <property type="match status" value="1"/>
</dbReference>
<dbReference type="HAMAP" id="MF_00041">
    <property type="entry name" value="Cys_tRNA_synth"/>
    <property type="match status" value="1"/>
</dbReference>
<dbReference type="InterPro" id="IPR015803">
    <property type="entry name" value="Cys-tRNA-ligase"/>
</dbReference>
<dbReference type="InterPro" id="IPR015273">
    <property type="entry name" value="Cys-tRNA-synt_Ia_DALR"/>
</dbReference>
<dbReference type="InterPro" id="IPR024909">
    <property type="entry name" value="Cys-tRNA/MSH_ligase"/>
</dbReference>
<dbReference type="InterPro" id="IPR056411">
    <property type="entry name" value="CysS_C"/>
</dbReference>
<dbReference type="InterPro" id="IPR014729">
    <property type="entry name" value="Rossmann-like_a/b/a_fold"/>
</dbReference>
<dbReference type="InterPro" id="IPR032678">
    <property type="entry name" value="tRNA-synt_1_cat_dom"/>
</dbReference>
<dbReference type="InterPro" id="IPR009080">
    <property type="entry name" value="tRNAsynth_Ia_anticodon-bd"/>
</dbReference>
<dbReference type="NCBIfam" id="TIGR00435">
    <property type="entry name" value="cysS"/>
    <property type="match status" value="1"/>
</dbReference>
<dbReference type="PANTHER" id="PTHR10890:SF3">
    <property type="entry name" value="CYSTEINE--TRNA LIGASE, CYTOPLASMIC"/>
    <property type="match status" value="1"/>
</dbReference>
<dbReference type="PANTHER" id="PTHR10890">
    <property type="entry name" value="CYSTEINYL-TRNA SYNTHETASE"/>
    <property type="match status" value="1"/>
</dbReference>
<dbReference type="Pfam" id="PF23493">
    <property type="entry name" value="CysS_C"/>
    <property type="match status" value="1"/>
</dbReference>
<dbReference type="Pfam" id="PF09190">
    <property type="entry name" value="DALR_2"/>
    <property type="match status" value="1"/>
</dbReference>
<dbReference type="Pfam" id="PF01406">
    <property type="entry name" value="tRNA-synt_1e"/>
    <property type="match status" value="1"/>
</dbReference>
<dbReference type="PRINTS" id="PR00983">
    <property type="entry name" value="TRNASYNTHCYS"/>
</dbReference>
<dbReference type="SMART" id="SM00840">
    <property type="entry name" value="DALR_2"/>
    <property type="match status" value="1"/>
</dbReference>
<dbReference type="SUPFAM" id="SSF47323">
    <property type="entry name" value="Anticodon-binding domain of a subclass of class I aminoacyl-tRNA synthetases"/>
    <property type="match status" value="1"/>
</dbReference>
<dbReference type="SUPFAM" id="SSF52374">
    <property type="entry name" value="Nucleotidylyl transferase"/>
    <property type="match status" value="1"/>
</dbReference>
<keyword id="KW-0030">Aminoacyl-tRNA synthetase</keyword>
<keyword id="KW-0067">ATP-binding</keyword>
<keyword id="KW-0963">Cytoplasm</keyword>
<keyword id="KW-0436">Ligase</keyword>
<keyword id="KW-0479">Metal-binding</keyword>
<keyword id="KW-0547">Nucleotide-binding</keyword>
<keyword id="KW-0648">Protein biosynthesis</keyword>
<keyword id="KW-0862">Zinc</keyword>
<feature type="chain" id="PRO_1000006575" description="Cysteine--tRNA ligase">
    <location>
        <begin position="1"/>
        <end position="464"/>
    </location>
</feature>
<feature type="short sequence motif" description="'HIGH' region">
    <location>
        <begin position="29"/>
        <end position="39"/>
    </location>
</feature>
<feature type="short sequence motif" description="'KMSKS' region">
    <location>
        <begin position="266"/>
        <end position="270"/>
    </location>
</feature>
<feature type="binding site" evidence="1">
    <location>
        <position position="27"/>
    </location>
    <ligand>
        <name>Zn(2+)</name>
        <dbReference type="ChEBI" id="CHEBI:29105"/>
    </ligand>
</feature>
<feature type="binding site" evidence="1">
    <location>
        <position position="203"/>
    </location>
    <ligand>
        <name>Zn(2+)</name>
        <dbReference type="ChEBI" id="CHEBI:29105"/>
    </ligand>
</feature>
<feature type="binding site" evidence="1">
    <location>
        <position position="234"/>
    </location>
    <ligand>
        <name>Zn(2+)</name>
        <dbReference type="ChEBI" id="CHEBI:29105"/>
    </ligand>
</feature>
<feature type="binding site" evidence="1">
    <location>
        <position position="238"/>
    </location>
    <ligand>
        <name>Zn(2+)</name>
        <dbReference type="ChEBI" id="CHEBI:29105"/>
    </ligand>
</feature>
<feature type="binding site" evidence="1">
    <location>
        <position position="269"/>
    </location>
    <ligand>
        <name>ATP</name>
        <dbReference type="ChEBI" id="CHEBI:30616"/>
    </ligand>
</feature>
<evidence type="ECO:0000255" key="1">
    <source>
        <dbReference type="HAMAP-Rule" id="MF_00041"/>
    </source>
</evidence>
<accession>A7ZDQ1</accession>
<organism>
    <name type="scientific">Campylobacter concisus (strain 13826)</name>
    <dbReference type="NCBI Taxonomy" id="360104"/>
    <lineage>
        <taxon>Bacteria</taxon>
        <taxon>Pseudomonadati</taxon>
        <taxon>Campylobacterota</taxon>
        <taxon>Epsilonproteobacteria</taxon>
        <taxon>Campylobacterales</taxon>
        <taxon>Campylobacteraceae</taxon>
        <taxon>Campylobacter</taxon>
    </lineage>
</organism>
<reference key="1">
    <citation type="submission" date="2007-10" db="EMBL/GenBank/DDBJ databases">
        <title>Genome sequence of Campylobacter concisus 13826 isolated from human feces.</title>
        <authorList>
            <person name="Fouts D.E."/>
            <person name="Mongodin E.F."/>
            <person name="Puiu D."/>
            <person name="Sebastian Y."/>
            <person name="Miller W.G."/>
            <person name="Mandrell R.E."/>
            <person name="On S."/>
            <person name="Nelson K.E."/>
        </authorList>
    </citation>
    <scope>NUCLEOTIDE SEQUENCE [LARGE SCALE GENOMIC DNA]</scope>
    <source>
        <strain>13826</strain>
    </source>
</reference>
<proteinExistence type="inferred from homology"/>
<sequence length="464" mass="53149">MRIFDTSKREKVEFSPIKDGEVSIYLCGPTVYDDAHLGHAKSAVSFDLLRRVLKALGCKVKFARNYTDIDDKILNKMAQTGQSLEEITNKYIAHYESDMGALNVLDPDFKPKATQCLEAIISYIKVLMDRGVAYKTSDGIYFDTSKDSGYFSISGKDNNTDLIARVASFGEKRDEKDFVLWKFDEKWYESPFGKGRPGWHTECVAMIREFLSDKENDKFEIDIHAGGIDLLFPHHENEASQCRCAYHKNLSKYWMHNGFIKVNNEKMSKSLNNSFFVKDALKNVHGEVLRYYLLTSHYRAHFNYSDEDLVASKKRLDKIYRLKKRVDGVQAGMANESFKSELLEALSDDLNASKALASVDEFVKTANERLDNNPKDKAYKAEVVANLELIGEILGIAITNYVEYFQFGVSDEQKEHIQKLLDERAVAKKERNFARADEIRDELAKMNISIMDTPNGAVWERNNE</sequence>
<gene>
    <name evidence="1" type="primary">cysS</name>
    <name type="ordered locus">Ccon26_10510</name>
    <name type="ORF">CCC13826_0116</name>
</gene>
<protein>
    <recommendedName>
        <fullName evidence="1">Cysteine--tRNA ligase</fullName>
        <ecNumber evidence="1">6.1.1.16</ecNumber>
    </recommendedName>
    <alternativeName>
        <fullName evidence="1">Cysteinyl-tRNA synthetase</fullName>
        <shortName evidence="1">CysRS</shortName>
    </alternativeName>
</protein>